<comment type="function">
    <text>TRAP proteins are part of a complex whose function is to bind calcium to the ER membrane and thereby regulate the retention of ER resident proteins. May be involved in the recycling of the translocation apparatus after completion of the translocation process or may function as a membrane-bound chaperone facilitating folding of translocated proteins.</text>
</comment>
<comment type="subunit">
    <text evidence="1">Heterotetramer of TRAP-alpha, TRAP-beta, TRAP-delta and TRAP-gamma. Interacts with palmitoylated calnexin (CALX), the interaction is required for efficient folding of glycosylated proteins (By similarity).</text>
</comment>
<comment type="subcellular location">
    <subcellularLocation>
        <location>Endoplasmic reticulum membrane</location>
        <topology>Single-pass type I membrane protein</topology>
    </subcellularLocation>
</comment>
<comment type="domain">
    <text>Shows a remarkable charge distribution with the N-terminus being highly negatively charged, and the cytoplasmic C-terminus positively charged.</text>
</comment>
<comment type="PTM">
    <text>Phosphorylated in its cytoplasmic tail.</text>
</comment>
<comment type="miscellaneous">
    <text>Seems to bind calcium.</text>
</comment>
<comment type="similarity">
    <text evidence="5">Belongs to the TRAP-alpha family.</text>
</comment>
<proteinExistence type="evidence at protein level"/>
<organism>
    <name type="scientific">Canis lupus familiaris</name>
    <name type="common">Dog</name>
    <name type="synonym">Canis familiaris</name>
    <dbReference type="NCBI Taxonomy" id="9615"/>
    <lineage>
        <taxon>Eukaryota</taxon>
        <taxon>Metazoa</taxon>
        <taxon>Chordata</taxon>
        <taxon>Craniata</taxon>
        <taxon>Vertebrata</taxon>
        <taxon>Euteleostomi</taxon>
        <taxon>Mammalia</taxon>
        <taxon>Eutheria</taxon>
        <taxon>Laurasiatheria</taxon>
        <taxon>Carnivora</taxon>
        <taxon>Caniformia</taxon>
        <taxon>Canidae</taxon>
        <taxon>Canis</taxon>
    </lineage>
</organism>
<protein>
    <recommendedName>
        <fullName>Translocon-associated protein subunit alpha</fullName>
        <shortName>TRAP-alpha</shortName>
    </recommendedName>
    <alternativeName>
        <fullName>PGP35</fullName>
    </alternativeName>
    <alternativeName>
        <fullName>Signal sequence receptor subunit alpha</fullName>
        <shortName>SSR-alpha</shortName>
    </alternativeName>
</protein>
<accession>P16967</accession>
<dbReference type="EMBL" id="X51367">
    <property type="protein sequence ID" value="CAA35752.1"/>
    <property type="molecule type" value="mRNA"/>
</dbReference>
<dbReference type="PIR" id="S08993">
    <property type="entry name" value="S08993"/>
</dbReference>
<dbReference type="RefSeq" id="NP_001003270.1">
    <property type="nucleotide sequence ID" value="NM_001003270.1"/>
</dbReference>
<dbReference type="PDB" id="8BTK">
    <property type="method" value="EM"/>
    <property type="resolution" value="3.50 A"/>
    <property type="chains" value="TA=1-286"/>
</dbReference>
<dbReference type="PDB" id="8RJC">
    <property type="method" value="EM"/>
    <property type="resolution" value="2.90 A"/>
    <property type="chains" value="5=1-286"/>
</dbReference>
<dbReference type="PDB" id="8RJD">
    <property type="method" value="EM"/>
    <property type="resolution" value="2.79 A"/>
    <property type="chains" value="5=1-286"/>
</dbReference>
<dbReference type="PDBsum" id="8BTK"/>
<dbReference type="PDBsum" id="8RJC"/>
<dbReference type="PDBsum" id="8RJD"/>
<dbReference type="EMDB" id="EMD-16232"/>
<dbReference type="EMDB" id="EMD-19197"/>
<dbReference type="EMDB" id="EMD-19198"/>
<dbReference type="SMR" id="P16967"/>
<dbReference type="CORUM" id="P16967"/>
<dbReference type="FunCoup" id="P16967">
    <property type="interactions" value="1901"/>
</dbReference>
<dbReference type="STRING" id="9615.ENSCAFP00000053130"/>
<dbReference type="GlyCosmos" id="P16967">
    <property type="glycosylation" value="2 sites, No reported glycans"/>
</dbReference>
<dbReference type="PaxDb" id="9612-ENSCAFP00000014018"/>
<dbReference type="GeneID" id="403951"/>
<dbReference type="KEGG" id="cfa:403951"/>
<dbReference type="CTD" id="6745"/>
<dbReference type="eggNOG" id="KOG1631">
    <property type="taxonomic scope" value="Eukaryota"/>
</dbReference>
<dbReference type="InParanoid" id="P16967"/>
<dbReference type="OrthoDB" id="1926781at2759"/>
<dbReference type="Proteomes" id="UP000002254">
    <property type="component" value="Unplaced"/>
</dbReference>
<dbReference type="Proteomes" id="UP000694429">
    <property type="component" value="Unplaced"/>
</dbReference>
<dbReference type="Proteomes" id="UP000694542">
    <property type="component" value="Unplaced"/>
</dbReference>
<dbReference type="Proteomes" id="UP000805418">
    <property type="component" value="Unplaced"/>
</dbReference>
<dbReference type="GO" id="GO:0005783">
    <property type="term" value="C:endoplasmic reticulum"/>
    <property type="evidence" value="ECO:0000318"/>
    <property type="project" value="GO_Central"/>
</dbReference>
<dbReference type="GO" id="GO:0005789">
    <property type="term" value="C:endoplasmic reticulum membrane"/>
    <property type="evidence" value="ECO:0000304"/>
    <property type="project" value="Reactome"/>
</dbReference>
<dbReference type="InterPro" id="IPR005595">
    <property type="entry name" value="TRAP_alpha"/>
</dbReference>
<dbReference type="PANTHER" id="PTHR12924:SF0">
    <property type="entry name" value="TRANSLOCON-ASSOCIATED PROTEIN SUBUNIT ALPHA"/>
    <property type="match status" value="1"/>
</dbReference>
<dbReference type="PANTHER" id="PTHR12924">
    <property type="entry name" value="TRANSLOCON-ASSOCIATED PROTEIN, ALPHA SUBUNIT"/>
    <property type="match status" value="1"/>
</dbReference>
<dbReference type="Pfam" id="PF03896">
    <property type="entry name" value="TRAP_alpha"/>
    <property type="match status" value="1"/>
</dbReference>
<sequence length="286" mass="31976">MRVLPRLLLLLLLAFPAAVLLRGGPGGSLVAAQDLTEDEETVEDSIIEDEDDEAEVEEDEPTDLAEDKEEEDVSGEPEASPSADTTILFVKGEDFPANNIVKFLVGFTNKGTEDFIVESLDASFRYPQDYQFYIQNFTALPLNTVVPPQRQATFEYSFIPAEPMGGRPFGLVINLNYKDLNGNVFQDAVFNQTVTIIEREDGLDGETIFMYMFLAGLGLLVVVGLHQLLESRKRKRPIQKVEMGTSSQNDVDMSWIPQETLNQINKASPRRLPRKRAQKRSVGSDE</sequence>
<keyword id="KW-0002">3D-structure</keyword>
<keyword id="KW-0106">Calcium</keyword>
<keyword id="KW-0903">Direct protein sequencing</keyword>
<keyword id="KW-0256">Endoplasmic reticulum</keyword>
<keyword id="KW-0325">Glycoprotein</keyword>
<keyword id="KW-0472">Membrane</keyword>
<keyword id="KW-0597">Phosphoprotein</keyword>
<keyword id="KW-1185">Reference proteome</keyword>
<keyword id="KW-0732">Signal</keyword>
<keyword id="KW-0812">Transmembrane</keyword>
<keyword id="KW-1133">Transmembrane helix</keyword>
<reference key="1">
    <citation type="journal article" date="1990" name="Eur. J. Biochem.">
        <title>Structure and biosynthesis of the signal-sequence receptor.</title>
        <authorList>
            <person name="Prehn S."/>
            <person name="Herz J."/>
            <person name="Hartmann E."/>
            <person name="Kurzchalia T.V."/>
            <person name="Frank R."/>
            <person name="Roemisch K."/>
            <person name="Dobberstein B."/>
            <person name="Rapoport T.A."/>
        </authorList>
    </citation>
    <scope>NUCLEOTIDE SEQUENCE [MRNA]</scope>
    <scope>PARTIAL PROTEIN SEQUENCE</scope>
    <source>
        <strain>Cocker spaniel</strain>
        <tissue>Kidney</tissue>
    </source>
</reference>
<reference key="2">
    <citation type="journal article" date="1991" name="J. Biol. Chem.">
        <title>SSR alpha and associated calnexin are major calcium binding proteins of the endoplasmic reticulum membrane.</title>
        <authorList>
            <person name="Wada I."/>
            <person name="Rindress D."/>
            <person name="Cameron P.H."/>
            <person name="Ou W.-J."/>
            <person name="Doherty J.J. II"/>
            <person name="Louvard D."/>
            <person name="Bell A.W."/>
            <person name="Dignard D."/>
            <person name="Thomas D.Y."/>
            <person name="Bergeron J.J.M."/>
        </authorList>
    </citation>
    <scope>PROTEIN SEQUENCE OF 165-186 AND 254-264</scope>
</reference>
<feature type="signal peptide" evidence="3">
    <location>
        <begin position="1"/>
        <end position="23"/>
    </location>
</feature>
<feature type="chain" id="PRO_0000033280" description="Translocon-associated protein subunit alpha">
    <location>
        <begin position="24"/>
        <end position="286"/>
    </location>
</feature>
<feature type="topological domain" description="Lumenal" evidence="3">
    <location>
        <begin position="24"/>
        <end position="207"/>
    </location>
</feature>
<feature type="transmembrane region" description="Helical" evidence="3">
    <location>
        <begin position="208"/>
        <end position="228"/>
    </location>
</feature>
<feature type="topological domain" description="Cytoplasmic" evidence="3">
    <location>
        <begin position="229"/>
        <end position="286"/>
    </location>
</feature>
<feature type="region of interest" description="Disordered" evidence="4">
    <location>
        <begin position="37"/>
        <end position="83"/>
    </location>
</feature>
<feature type="region of interest" description="Disordered" evidence="4">
    <location>
        <begin position="261"/>
        <end position="286"/>
    </location>
</feature>
<feature type="compositionally biased region" description="Acidic residues" evidence="4">
    <location>
        <begin position="37"/>
        <end position="75"/>
    </location>
</feature>
<feature type="compositionally biased region" description="Basic residues" evidence="4">
    <location>
        <begin position="268"/>
        <end position="279"/>
    </location>
</feature>
<feature type="modified residue" description="Phosphoserine" evidence="2">
    <location>
        <position position="247"/>
    </location>
</feature>
<feature type="modified residue" description="Phosphothreonine" evidence="2">
    <location>
        <position position="260"/>
    </location>
</feature>
<feature type="modified residue" description="Phosphoserine" evidence="2">
    <location>
        <position position="268"/>
    </location>
</feature>
<feature type="glycosylation site" description="N-linked (GlcNAc...) asparagine" evidence="3">
    <location>
        <position position="136"/>
    </location>
</feature>
<feature type="glycosylation site" description="N-linked (GlcNAc...) asparagine" evidence="3">
    <location>
        <position position="191"/>
    </location>
</feature>
<gene>
    <name type="primary">SSR1</name>
</gene>
<name>SSRA_CANLF</name>
<evidence type="ECO:0000250" key="1"/>
<evidence type="ECO:0000250" key="2">
    <source>
        <dbReference type="UniProtKB" id="P43307"/>
    </source>
</evidence>
<evidence type="ECO:0000255" key="3"/>
<evidence type="ECO:0000256" key="4">
    <source>
        <dbReference type="SAM" id="MobiDB-lite"/>
    </source>
</evidence>
<evidence type="ECO:0000305" key="5"/>